<keyword id="KW-0067">ATP-binding</keyword>
<keyword id="KW-0472">Membrane</keyword>
<keyword id="KW-0496">Mitochondrion</keyword>
<keyword id="KW-0999">Mitochondrion inner membrane</keyword>
<keyword id="KW-0547">Nucleotide-binding</keyword>
<keyword id="KW-1185">Reference proteome</keyword>
<keyword id="KW-0809">Transit peptide</keyword>
<keyword id="KW-1278">Translocase</keyword>
<keyword id="KW-0812">Transmembrane</keyword>
<keyword id="KW-1133">Transmembrane helix</keyword>
<keyword id="KW-0813">Transport</keyword>
<gene>
    <name evidence="8" type="primary">ATM1</name>
    <name type="ordered locus">CNI01920</name>
</gene>
<organism>
    <name type="scientific">Cryptococcus neoformans var. neoformans serotype D (strain JEC21 / ATCC MYA-565)</name>
    <name type="common">Filobasidiella neoformans</name>
    <dbReference type="NCBI Taxonomy" id="214684"/>
    <lineage>
        <taxon>Eukaryota</taxon>
        <taxon>Fungi</taxon>
        <taxon>Dikarya</taxon>
        <taxon>Basidiomycota</taxon>
        <taxon>Agaricomycotina</taxon>
        <taxon>Tremellomycetes</taxon>
        <taxon>Tremellales</taxon>
        <taxon>Cryptococcaceae</taxon>
        <taxon>Cryptococcus</taxon>
        <taxon>Cryptococcus neoformans species complex</taxon>
    </lineage>
</organism>
<accession>P0CL92</accession>
<accession>Q55NA7</accession>
<accession>Q5KBN9</accession>
<proteinExistence type="inferred from homology"/>
<dbReference type="EC" id="7.-.-.-" evidence="2"/>
<dbReference type="EMBL" id="AE017349">
    <property type="protein sequence ID" value="AAW45354.1"/>
    <property type="molecule type" value="Genomic_DNA"/>
</dbReference>
<dbReference type="RefSeq" id="XP_572661.1">
    <property type="nucleotide sequence ID" value="XM_572661.1"/>
</dbReference>
<dbReference type="SMR" id="P0CL92"/>
<dbReference type="FunCoup" id="P0CL92">
    <property type="interactions" value="337"/>
</dbReference>
<dbReference type="STRING" id="214684.P0CL92"/>
<dbReference type="PaxDb" id="214684-P0CL92"/>
<dbReference type="EnsemblFungi" id="AAW45354">
    <property type="protein sequence ID" value="AAW45354"/>
    <property type="gene ID" value="CNI01920"/>
</dbReference>
<dbReference type="VEuPathDB" id="FungiDB:CNI01920"/>
<dbReference type="eggNOG" id="KOG0057">
    <property type="taxonomic scope" value="Eukaryota"/>
</dbReference>
<dbReference type="HOGENOM" id="CLU_000604_84_1_1"/>
<dbReference type="InParanoid" id="P0CL92"/>
<dbReference type="OMA" id="VFHIIPI"/>
<dbReference type="OrthoDB" id="6500128at2759"/>
<dbReference type="Proteomes" id="UP000002149">
    <property type="component" value="Chromosome 9"/>
</dbReference>
<dbReference type="GO" id="GO:0005743">
    <property type="term" value="C:mitochondrial inner membrane"/>
    <property type="evidence" value="ECO:0000318"/>
    <property type="project" value="GO_Central"/>
</dbReference>
<dbReference type="GO" id="GO:0140359">
    <property type="term" value="F:ABC-type transporter activity"/>
    <property type="evidence" value="ECO:0007669"/>
    <property type="project" value="InterPro"/>
</dbReference>
<dbReference type="GO" id="GO:0005524">
    <property type="term" value="F:ATP binding"/>
    <property type="evidence" value="ECO:0007669"/>
    <property type="project" value="UniProtKB-KW"/>
</dbReference>
<dbReference type="GO" id="GO:0016887">
    <property type="term" value="F:ATP hydrolysis activity"/>
    <property type="evidence" value="ECO:0007669"/>
    <property type="project" value="InterPro"/>
</dbReference>
<dbReference type="GO" id="GO:0042626">
    <property type="term" value="F:ATPase-coupled transmembrane transporter activity"/>
    <property type="evidence" value="ECO:0000318"/>
    <property type="project" value="GO_Central"/>
</dbReference>
<dbReference type="GO" id="GO:0006879">
    <property type="term" value="P:intracellular iron ion homeostasis"/>
    <property type="evidence" value="ECO:0000318"/>
    <property type="project" value="GO_Central"/>
</dbReference>
<dbReference type="GO" id="GO:0055085">
    <property type="term" value="P:transmembrane transport"/>
    <property type="evidence" value="ECO:0000318"/>
    <property type="project" value="GO_Central"/>
</dbReference>
<dbReference type="CDD" id="cd18582">
    <property type="entry name" value="ABC_6TM_ATM1_ABCB7"/>
    <property type="match status" value="1"/>
</dbReference>
<dbReference type="CDD" id="cd03253">
    <property type="entry name" value="ABCC_ATM1_transporter"/>
    <property type="match status" value="1"/>
</dbReference>
<dbReference type="FunFam" id="1.20.1560.10:FF:000004">
    <property type="entry name" value="ATP-binding cassette sub-family B member 7"/>
    <property type="match status" value="1"/>
</dbReference>
<dbReference type="FunFam" id="3.40.50.300:FF:000186">
    <property type="entry name" value="ATP-binding cassette sub-family B member 7, mitochondrial"/>
    <property type="match status" value="1"/>
</dbReference>
<dbReference type="Gene3D" id="1.20.1560.10">
    <property type="entry name" value="ABC transporter type 1, transmembrane domain"/>
    <property type="match status" value="1"/>
</dbReference>
<dbReference type="Gene3D" id="3.40.50.300">
    <property type="entry name" value="P-loop containing nucleotide triphosphate hydrolases"/>
    <property type="match status" value="1"/>
</dbReference>
<dbReference type="InterPro" id="IPR003593">
    <property type="entry name" value="AAA+_ATPase"/>
</dbReference>
<dbReference type="InterPro" id="IPR011527">
    <property type="entry name" value="ABC1_TM_dom"/>
</dbReference>
<dbReference type="InterPro" id="IPR036640">
    <property type="entry name" value="ABC1_TM_sf"/>
</dbReference>
<dbReference type="InterPro" id="IPR003439">
    <property type="entry name" value="ABC_transporter-like_ATP-bd"/>
</dbReference>
<dbReference type="InterPro" id="IPR017871">
    <property type="entry name" value="ABC_transporter-like_CS"/>
</dbReference>
<dbReference type="InterPro" id="IPR027417">
    <property type="entry name" value="P-loop_NTPase"/>
</dbReference>
<dbReference type="InterPro" id="IPR039421">
    <property type="entry name" value="Type_1_exporter"/>
</dbReference>
<dbReference type="PANTHER" id="PTHR24221">
    <property type="entry name" value="ATP-BINDING CASSETTE SUB-FAMILY B"/>
    <property type="match status" value="1"/>
</dbReference>
<dbReference type="PANTHER" id="PTHR24221:SF402">
    <property type="entry name" value="IRON-SULFUR CLUSTERS TRANSPORTER ABCB7, MITOCHONDRIAL"/>
    <property type="match status" value="1"/>
</dbReference>
<dbReference type="Pfam" id="PF00664">
    <property type="entry name" value="ABC_membrane"/>
    <property type="match status" value="1"/>
</dbReference>
<dbReference type="Pfam" id="PF00005">
    <property type="entry name" value="ABC_tran"/>
    <property type="match status" value="1"/>
</dbReference>
<dbReference type="SMART" id="SM00382">
    <property type="entry name" value="AAA"/>
    <property type="match status" value="1"/>
</dbReference>
<dbReference type="SUPFAM" id="SSF90123">
    <property type="entry name" value="ABC transporter transmembrane region"/>
    <property type="match status" value="1"/>
</dbReference>
<dbReference type="SUPFAM" id="SSF52540">
    <property type="entry name" value="P-loop containing nucleoside triphosphate hydrolases"/>
    <property type="match status" value="1"/>
</dbReference>
<dbReference type="PROSITE" id="PS50929">
    <property type="entry name" value="ABC_TM1F"/>
    <property type="match status" value="1"/>
</dbReference>
<dbReference type="PROSITE" id="PS00211">
    <property type="entry name" value="ABC_TRANSPORTER_1"/>
    <property type="match status" value="1"/>
</dbReference>
<dbReference type="PROSITE" id="PS50893">
    <property type="entry name" value="ABC_TRANSPORTER_2"/>
    <property type="match status" value="1"/>
</dbReference>
<reference key="1">
    <citation type="journal article" date="2005" name="Science">
        <title>The genome of the basidiomycetous yeast and human pathogen Cryptococcus neoformans.</title>
        <authorList>
            <person name="Loftus B.J."/>
            <person name="Fung E."/>
            <person name="Roncaglia P."/>
            <person name="Rowley D."/>
            <person name="Amedeo P."/>
            <person name="Bruno D."/>
            <person name="Vamathevan J."/>
            <person name="Miranda M."/>
            <person name="Anderson I.J."/>
            <person name="Fraser J.A."/>
            <person name="Allen J.E."/>
            <person name="Bosdet I.E."/>
            <person name="Brent M.R."/>
            <person name="Chiu R."/>
            <person name="Doering T.L."/>
            <person name="Donlin M.J."/>
            <person name="D'Souza C.A."/>
            <person name="Fox D.S."/>
            <person name="Grinberg V."/>
            <person name="Fu J."/>
            <person name="Fukushima M."/>
            <person name="Haas B.J."/>
            <person name="Huang J.C."/>
            <person name="Janbon G."/>
            <person name="Jones S.J.M."/>
            <person name="Koo H.L."/>
            <person name="Krzywinski M.I."/>
            <person name="Kwon-Chung K.J."/>
            <person name="Lengeler K.B."/>
            <person name="Maiti R."/>
            <person name="Marra M.A."/>
            <person name="Marra R.E."/>
            <person name="Mathewson C.A."/>
            <person name="Mitchell T.G."/>
            <person name="Pertea M."/>
            <person name="Riggs F.R."/>
            <person name="Salzberg S.L."/>
            <person name="Schein J.E."/>
            <person name="Shvartsbeyn A."/>
            <person name="Shin H."/>
            <person name="Shumway M."/>
            <person name="Specht C.A."/>
            <person name="Suh B.B."/>
            <person name="Tenney A."/>
            <person name="Utterback T.R."/>
            <person name="Wickes B.L."/>
            <person name="Wortman J.R."/>
            <person name="Wye N.H."/>
            <person name="Kronstad J.W."/>
            <person name="Lodge J.K."/>
            <person name="Heitman J."/>
            <person name="Davis R.W."/>
            <person name="Fraser C.M."/>
            <person name="Hyman R.W."/>
        </authorList>
    </citation>
    <scope>NUCLEOTIDE SEQUENCE [LARGE SCALE GENOMIC DNA]</scope>
    <source>
        <strain>JEC21 / ATCC MYA-565</strain>
    </source>
</reference>
<protein>
    <recommendedName>
        <fullName evidence="8">Iron-sulfur clusters transporter ATM1, mitochondrial</fullName>
        <ecNumber evidence="2">7.-.-.-</ecNumber>
    </recommendedName>
</protein>
<name>ATM1_CRYNJ</name>
<comment type="function">
    <text evidence="1">Performs an essential function in the generation of cytoplasmic iron-sulfur proteins by mediating the ATP-dependent export of Fe/S cluster precursors synthesized by NFS1 and other mitochondrial proteins (By similarity). Hydrolyzes ATP (By similarity). Binds glutathione and may function by transporting a glutathione-conjugated iron-sulfur compound (By similarity).</text>
</comment>
<comment type="subunit">
    <text evidence="1">Homodimer.</text>
</comment>
<comment type="subcellular location">
    <subcellularLocation>
        <location evidence="1">Mitochondrion inner membrane</location>
        <topology evidence="6">Multi-pass membrane protein</topology>
    </subcellularLocation>
</comment>
<comment type="similarity">
    <text evidence="8">Belongs to the ABC transporter superfamily. ABCB family. Heavy Metal importer (TC 3.A.1.210) subfamily.</text>
</comment>
<feature type="transit peptide" description="Mitochondrion" evidence="4">
    <location>
        <begin position="1"/>
        <end position="55"/>
    </location>
</feature>
<feature type="chain" id="PRO_0000255443" description="Iron-sulfur clusters transporter ATM1, mitochondrial">
    <location>
        <begin position="56"/>
        <end position="734"/>
    </location>
</feature>
<feature type="topological domain" description="Mitochondrial matrix" evidence="1">
    <location>
        <begin position="56"/>
        <end position="142"/>
    </location>
</feature>
<feature type="transmembrane region" description="Helical" evidence="6">
    <location>
        <begin position="143"/>
        <end position="164"/>
    </location>
</feature>
<feature type="topological domain" description="Mitochondrial intermembrane" evidence="1">
    <location>
        <begin position="165"/>
        <end position="186"/>
    </location>
</feature>
<feature type="transmembrane region" description="Helical" evidence="6">
    <location>
        <begin position="187"/>
        <end position="210"/>
    </location>
</feature>
<feature type="topological domain" description="Mitochondrial matrix" evidence="1">
    <location>
        <begin position="211"/>
        <end position="259"/>
    </location>
</feature>
<feature type="transmembrane region" description="Helical" evidence="6">
    <location>
        <begin position="260"/>
        <end position="283"/>
    </location>
</feature>
<feature type="topological domain" description="Mitochondrial intermembrane" evidence="1">
    <location>
        <position position="284"/>
    </location>
</feature>
<feature type="transmembrane region" description="Helical" evidence="6">
    <location>
        <begin position="285"/>
        <end position="305"/>
    </location>
</feature>
<feature type="topological domain" description="Mitochondrial matrix" evidence="1">
    <location>
        <begin position="306"/>
        <end position="371"/>
    </location>
</feature>
<feature type="transmembrane region" description="Helical" evidence="6">
    <location>
        <begin position="372"/>
        <end position="390"/>
    </location>
</feature>
<feature type="topological domain" description="Mitochondrial intermembrane" evidence="1">
    <location>
        <begin position="391"/>
        <end position="405"/>
    </location>
</feature>
<feature type="transmembrane region" description="Helical" evidence="6">
    <location>
        <begin position="406"/>
        <end position="427"/>
    </location>
</feature>
<feature type="topological domain" description="Mitochondrial matrix" evidence="1">
    <location>
        <begin position="428"/>
        <end position="734"/>
    </location>
</feature>
<feature type="domain" description="ABC transmembrane type-1" evidence="6">
    <location>
        <begin position="143"/>
        <end position="432"/>
    </location>
</feature>
<feature type="domain" description="ABC transporter" evidence="5">
    <location>
        <begin position="466"/>
        <end position="702"/>
    </location>
</feature>
<feature type="region of interest" description="Disordered" evidence="7">
    <location>
        <begin position="72"/>
        <end position="114"/>
    </location>
</feature>
<feature type="region of interest" description="Disordered" evidence="7">
    <location>
        <begin position="708"/>
        <end position="734"/>
    </location>
</feature>
<feature type="compositionally biased region" description="Polar residues" evidence="7">
    <location>
        <begin position="93"/>
        <end position="114"/>
    </location>
</feature>
<feature type="compositionally biased region" description="Basic and acidic residues" evidence="7">
    <location>
        <begin position="717"/>
        <end position="734"/>
    </location>
</feature>
<feature type="binding site" evidence="1">
    <location>
        <begin position="311"/>
        <end position="315"/>
    </location>
    <ligand>
        <name>glutathione</name>
        <dbReference type="ChEBI" id="CHEBI:57925"/>
    </ligand>
</feature>
<feature type="binding site" evidence="1">
    <location>
        <begin position="374"/>
        <end position="377"/>
    </location>
    <ligand>
        <name>glutathione</name>
        <dbReference type="ChEBI" id="CHEBI:57925"/>
    </ligand>
</feature>
<feature type="binding site" evidence="2">
    <location>
        <position position="424"/>
    </location>
    <ligand>
        <name>glutathione</name>
        <dbReference type="ChEBI" id="CHEBI:57925"/>
    </ligand>
</feature>
<feature type="binding site" evidence="3">
    <location>
        <position position="475"/>
    </location>
    <ligand>
        <name>ATP</name>
        <dbReference type="ChEBI" id="CHEBI:30616"/>
    </ligand>
</feature>
<feature type="binding site" evidence="5">
    <location>
        <begin position="499"/>
        <end position="510"/>
    </location>
    <ligand>
        <name>ATP</name>
        <dbReference type="ChEBI" id="CHEBI:30616"/>
    </ligand>
</feature>
<sequence length="734" mass="80770">MSFGSCSRHALFTPGALPGSFRTMTTSCVKRVYTAQIRGGDALGKRLPSVSSFPGQLPRHGSHFQSLAFFSTSRRRQTPPPPSPPTTSQSPTVPSKASTTPPTSLNTSKPVATESQDKTDWSIIAKLAGNIWPKNNPNVKFRVIGALTLLVAGKVLNVQVPFFFKTIVDSLNVPITESTTVWVLAGASIAGYGAARVLTTLFGELRNAVFASVAQNAIRKVARETFEHLLNMDMKFHLERQTGGLTRAIDRGTKGISFILSSIVFHVIPTALEISMVCGILSWKFGWDFAAVTAITMLLYTWFTIKTTAWRTTFRKQANAADNKGATVAVDSLINYEAVKSFNNEKYEVAQYDTTLKAYEKASVKIATSLAALNSGQNFIFSSALTMMMLLGAQGIVKGTMTVGDLVLVNQLVFQLSLPLNFLGTVYRELRQSLIDMDVMFNLQSLDSATKDSPTAKPLHLKGGEIEFRNVAFAYHPERPIFRDLSFKIPAGQKVAIVGPSGCGKSTVFRLLFRFYDSSSGQILIDGQDIKTVTLDSLRRSIGVVPQDTPLFHADILHNIRYGNLEATDEQVYEAARKAHVEGTIQRLPEKYATKVGERGLMISGGEKQRLAVARVLLKDPPVLFFDEATSALDVYTETELMRNINSILTGQGKTSVFIAHRLRTISDADLIIVLQDGYVAEQGTHEQLLAMPGGVYHGLWQAQLTESTQPTEEEIERQREELEVVDEKKKQQT</sequence>
<evidence type="ECO:0000250" key="1">
    <source>
        <dbReference type="UniProtKB" id="P40416"/>
    </source>
</evidence>
<evidence type="ECO:0000250" key="2">
    <source>
        <dbReference type="UniProtKB" id="Q2G506"/>
    </source>
</evidence>
<evidence type="ECO:0000250" key="3">
    <source>
        <dbReference type="UniProtKB" id="Q9NP58"/>
    </source>
</evidence>
<evidence type="ECO:0000255" key="4"/>
<evidence type="ECO:0000255" key="5">
    <source>
        <dbReference type="PROSITE-ProRule" id="PRU00434"/>
    </source>
</evidence>
<evidence type="ECO:0000255" key="6">
    <source>
        <dbReference type="PROSITE-ProRule" id="PRU00441"/>
    </source>
</evidence>
<evidence type="ECO:0000256" key="7">
    <source>
        <dbReference type="SAM" id="MobiDB-lite"/>
    </source>
</evidence>
<evidence type="ECO:0000305" key="8"/>